<protein>
    <recommendedName>
        <fullName evidence="1">Chaperone protein DnaJ</fullName>
    </recommendedName>
</protein>
<gene>
    <name evidence="1" type="primary">dnaJ</name>
    <name type="ordered locus">CPS_3820</name>
</gene>
<evidence type="ECO:0000255" key="1">
    <source>
        <dbReference type="HAMAP-Rule" id="MF_01152"/>
    </source>
</evidence>
<reference key="1">
    <citation type="journal article" date="2005" name="Proc. Natl. Acad. Sci. U.S.A.">
        <title>The psychrophilic lifestyle as revealed by the genome sequence of Colwellia psychrerythraea 34H through genomic and proteomic analyses.</title>
        <authorList>
            <person name="Methe B.A."/>
            <person name="Nelson K.E."/>
            <person name="Deming J.W."/>
            <person name="Momen B."/>
            <person name="Melamud E."/>
            <person name="Zhang X."/>
            <person name="Moult J."/>
            <person name="Madupu R."/>
            <person name="Nelson W.C."/>
            <person name="Dodson R.J."/>
            <person name="Brinkac L.M."/>
            <person name="Daugherty S.C."/>
            <person name="Durkin A.S."/>
            <person name="DeBoy R.T."/>
            <person name="Kolonay J.F."/>
            <person name="Sullivan S.A."/>
            <person name="Zhou L."/>
            <person name="Davidsen T.M."/>
            <person name="Wu M."/>
            <person name="Huston A.L."/>
            <person name="Lewis M."/>
            <person name="Weaver B."/>
            <person name="Weidman J.F."/>
            <person name="Khouri H."/>
            <person name="Utterback T.R."/>
            <person name="Feldblyum T.V."/>
            <person name="Fraser C.M."/>
        </authorList>
    </citation>
    <scope>NUCLEOTIDE SEQUENCE [LARGE SCALE GENOMIC DNA]</scope>
    <source>
        <strain>34H / ATCC BAA-681</strain>
    </source>
</reference>
<dbReference type="EMBL" id="CP000083">
    <property type="protein sequence ID" value="AAZ28384.1"/>
    <property type="molecule type" value="Genomic_DNA"/>
</dbReference>
<dbReference type="RefSeq" id="WP_011044569.1">
    <property type="nucleotide sequence ID" value="NC_003910.7"/>
</dbReference>
<dbReference type="SMR" id="Q47XI7"/>
<dbReference type="STRING" id="167879.CPS_3820"/>
<dbReference type="KEGG" id="cps:CPS_3820"/>
<dbReference type="eggNOG" id="COG0484">
    <property type="taxonomic scope" value="Bacteria"/>
</dbReference>
<dbReference type="HOGENOM" id="CLU_017633_0_7_6"/>
<dbReference type="Proteomes" id="UP000000547">
    <property type="component" value="Chromosome"/>
</dbReference>
<dbReference type="GO" id="GO:0005737">
    <property type="term" value="C:cytoplasm"/>
    <property type="evidence" value="ECO:0007669"/>
    <property type="project" value="UniProtKB-SubCell"/>
</dbReference>
<dbReference type="GO" id="GO:0005524">
    <property type="term" value="F:ATP binding"/>
    <property type="evidence" value="ECO:0007669"/>
    <property type="project" value="InterPro"/>
</dbReference>
<dbReference type="GO" id="GO:0031072">
    <property type="term" value="F:heat shock protein binding"/>
    <property type="evidence" value="ECO:0007669"/>
    <property type="project" value="InterPro"/>
</dbReference>
<dbReference type="GO" id="GO:0051082">
    <property type="term" value="F:unfolded protein binding"/>
    <property type="evidence" value="ECO:0007669"/>
    <property type="project" value="UniProtKB-UniRule"/>
</dbReference>
<dbReference type="GO" id="GO:0008270">
    <property type="term" value="F:zinc ion binding"/>
    <property type="evidence" value="ECO:0007669"/>
    <property type="project" value="UniProtKB-UniRule"/>
</dbReference>
<dbReference type="GO" id="GO:0051085">
    <property type="term" value="P:chaperone cofactor-dependent protein refolding"/>
    <property type="evidence" value="ECO:0007669"/>
    <property type="project" value="TreeGrafter"/>
</dbReference>
<dbReference type="GO" id="GO:0006260">
    <property type="term" value="P:DNA replication"/>
    <property type="evidence" value="ECO:0007669"/>
    <property type="project" value="UniProtKB-KW"/>
</dbReference>
<dbReference type="GO" id="GO:0042026">
    <property type="term" value="P:protein refolding"/>
    <property type="evidence" value="ECO:0007669"/>
    <property type="project" value="TreeGrafter"/>
</dbReference>
<dbReference type="GO" id="GO:0009408">
    <property type="term" value="P:response to heat"/>
    <property type="evidence" value="ECO:0007669"/>
    <property type="project" value="InterPro"/>
</dbReference>
<dbReference type="CDD" id="cd06257">
    <property type="entry name" value="DnaJ"/>
    <property type="match status" value="1"/>
</dbReference>
<dbReference type="CDD" id="cd10747">
    <property type="entry name" value="DnaJ_C"/>
    <property type="match status" value="1"/>
</dbReference>
<dbReference type="CDD" id="cd10719">
    <property type="entry name" value="DnaJ_zf"/>
    <property type="match status" value="1"/>
</dbReference>
<dbReference type="FunFam" id="1.10.287.110:FF:000034">
    <property type="entry name" value="Chaperone protein DnaJ"/>
    <property type="match status" value="1"/>
</dbReference>
<dbReference type="FunFam" id="2.10.230.10:FF:000002">
    <property type="entry name" value="Molecular chaperone DnaJ"/>
    <property type="match status" value="1"/>
</dbReference>
<dbReference type="FunFam" id="2.60.260.20:FF:000004">
    <property type="entry name" value="Molecular chaperone DnaJ"/>
    <property type="match status" value="1"/>
</dbReference>
<dbReference type="Gene3D" id="1.10.287.110">
    <property type="entry name" value="DnaJ domain"/>
    <property type="match status" value="1"/>
</dbReference>
<dbReference type="Gene3D" id="2.10.230.10">
    <property type="entry name" value="Heat shock protein DnaJ, cysteine-rich domain"/>
    <property type="match status" value="1"/>
</dbReference>
<dbReference type="Gene3D" id="2.60.260.20">
    <property type="entry name" value="Urease metallochaperone UreE, N-terminal domain"/>
    <property type="match status" value="2"/>
</dbReference>
<dbReference type="HAMAP" id="MF_01152">
    <property type="entry name" value="DnaJ"/>
    <property type="match status" value="1"/>
</dbReference>
<dbReference type="InterPro" id="IPR012724">
    <property type="entry name" value="DnaJ"/>
</dbReference>
<dbReference type="InterPro" id="IPR002939">
    <property type="entry name" value="DnaJ_C"/>
</dbReference>
<dbReference type="InterPro" id="IPR001623">
    <property type="entry name" value="DnaJ_domain"/>
</dbReference>
<dbReference type="InterPro" id="IPR018253">
    <property type="entry name" value="DnaJ_domain_CS"/>
</dbReference>
<dbReference type="InterPro" id="IPR008971">
    <property type="entry name" value="HSP40/DnaJ_pept-bd"/>
</dbReference>
<dbReference type="InterPro" id="IPR001305">
    <property type="entry name" value="HSP_DnaJ_Cys-rich_dom"/>
</dbReference>
<dbReference type="InterPro" id="IPR036410">
    <property type="entry name" value="HSP_DnaJ_Cys-rich_dom_sf"/>
</dbReference>
<dbReference type="InterPro" id="IPR036869">
    <property type="entry name" value="J_dom_sf"/>
</dbReference>
<dbReference type="NCBIfam" id="TIGR02349">
    <property type="entry name" value="DnaJ_bact"/>
    <property type="match status" value="1"/>
</dbReference>
<dbReference type="NCBIfam" id="NF008035">
    <property type="entry name" value="PRK10767.1"/>
    <property type="match status" value="1"/>
</dbReference>
<dbReference type="PANTHER" id="PTHR43096:SF48">
    <property type="entry name" value="CHAPERONE PROTEIN DNAJ"/>
    <property type="match status" value="1"/>
</dbReference>
<dbReference type="PANTHER" id="PTHR43096">
    <property type="entry name" value="DNAJ HOMOLOG 1, MITOCHONDRIAL-RELATED"/>
    <property type="match status" value="1"/>
</dbReference>
<dbReference type="Pfam" id="PF00226">
    <property type="entry name" value="DnaJ"/>
    <property type="match status" value="1"/>
</dbReference>
<dbReference type="Pfam" id="PF01556">
    <property type="entry name" value="DnaJ_C"/>
    <property type="match status" value="1"/>
</dbReference>
<dbReference type="Pfam" id="PF00684">
    <property type="entry name" value="DnaJ_CXXCXGXG"/>
    <property type="match status" value="1"/>
</dbReference>
<dbReference type="PRINTS" id="PR00625">
    <property type="entry name" value="JDOMAIN"/>
</dbReference>
<dbReference type="SMART" id="SM00271">
    <property type="entry name" value="DnaJ"/>
    <property type="match status" value="1"/>
</dbReference>
<dbReference type="SUPFAM" id="SSF46565">
    <property type="entry name" value="Chaperone J-domain"/>
    <property type="match status" value="1"/>
</dbReference>
<dbReference type="SUPFAM" id="SSF57938">
    <property type="entry name" value="DnaJ/Hsp40 cysteine-rich domain"/>
    <property type="match status" value="1"/>
</dbReference>
<dbReference type="SUPFAM" id="SSF49493">
    <property type="entry name" value="HSP40/DnaJ peptide-binding domain"/>
    <property type="match status" value="2"/>
</dbReference>
<dbReference type="PROSITE" id="PS00636">
    <property type="entry name" value="DNAJ_1"/>
    <property type="match status" value="1"/>
</dbReference>
<dbReference type="PROSITE" id="PS50076">
    <property type="entry name" value="DNAJ_2"/>
    <property type="match status" value="1"/>
</dbReference>
<dbReference type="PROSITE" id="PS51188">
    <property type="entry name" value="ZF_CR"/>
    <property type="match status" value="1"/>
</dbReference>
<sequence>MSKRDYYETLGVSQDASEKEVKKAYKKLAMKYHPDRTQGDKSKEETFKEVKEAYEILNDDQKRAAYDQYGHAAFEQGGNGGGGGGHGGGFGQDFGDIFGDIFGGGGGGRGRQRQQRGSDLRYNVDLSLEDAVKGKSLEIKVPTYVSCEPCDGSGAKKGTSAKTCSTCHGHGQVQMRQGLFAVQQTCPTCSGKGKVIADKCTSCRGQGRVEKTKTLSVKIPAGVDTGDRIRLSGEGEAGEHGAPAGDLYVQVNVRDHEIFVRDENHLYCEVPISFVTAALGGDIEVPTLGGKVKLKVPKETQTGKMFRLRGKGVKSVRSSTTGDLMCKVVIETPVNLSGDQADLLRQLEEKMASSSKKHSPKETGFFDGVKKFFDDLKS</sequence>
<comment type="function">
    <text evidence="1">Participates actively in the response to hyperosmotic and heat shock by preventing the aggregation of stress-denatured proteins and by disaggregating proteins, also in an autonomous, DnaK-independent fashion. Unfolded proteins bind initially to DnaJ; upon interaction with the DnaJ-bound protein, DnaK hydrolyzes its bound ATP, resulting in the formation of a stable complex. GrpE releases ADP from DnaK; ATP binding to DnaK triggers the release of the substrate protein, thus completing the reaction cycle. Several rounds of ATP-dependent interactions between DnaJ, DnaK and GrpE are required for fully efficient folding. Also involved, together with DnaK and GrpE, in the DNA replication of plasmids through activation of initiation proteins.</text>
</comment>
<comment type="cofactor">
    <cofactor evidence="1">
        <name>Zn(2+)</name>
        <dbReference type="ChEBI" id="CHEBI:29105"/>
    </cofactor>
    <text evidence="1">Binds 2 Zn(2+) ions per monomer.</text>
</comment>
<comment type="subunit">
    <text evidence="1">Homodimer.</text>
</comment>
<comment type="subcellular location">
    <subcellularLocation>
        <location evidence="1">Cytoplasm</location>
    </subcellularLocation>
</comment>
<comment type="domain">
    <text evidence="1">The J domain is necessary and sufficient to stimulate DnaK ATPase activity. Zinc center 1 plays an important role in the autonomous, DnaK-independent chaperone activity of DnaJ. Zinc center 2 is essential for interaction with DnaK and for DnaJ activity.</text>
</comment>
<comment type="similarity">
    <text evidence="1">Belongs to the DnaJ family.</text>
</comment>
<name>DNAJ_COLP3</name>
<proteinExistence type="inferred from homology"/>
<organism>
    <name type="scientific">Colwellia psychrerythraea (strain 34H / ATCC BAA-681)</name>
    <name type="common">Vibrio psychroerythus</name>
    <dbReference type="NCBI Taxonomy" id="167879"/>
    <lineage>
        <taxon>Bacteria</taxon>
        <taxon>Pseudomonadati</taxon>
        <taxon>Pseudomonadota</taxon>
        <taxon>Gammaproteobacteria</taxon>
        <taxon>Alteromonadales</taxon>
        <taxon>Colwelliaceae</taxon>
        <taxon>Colwellia</taxon>
    </lineage>
</organism>
<feature type="chain" id="PRO_1000085180" description="Chaperone protein DnaJ">
    <location>
        <begin position="1"/>
        <end position="378"/>
    </location>
</feature>
<feature type="domain" description="J" evidence="1">
    <location>
        <begin position="5"/>
        <end position="70"/>
    </location>
</feature>
<feature type="repeat" description="CXXCXGXG motif">
    <location>
        <begin position="147"/>
        <end position="154"/>
    </location>
</feature>
<feature type="repeat" description="CXXCXGXG motif">
    <location>
        <begin position="164"/>
        <end position="171"/>
    </location>
</feature>
<feature type="repeat" description="CXXCXGXG motif">
    <location>
        <begin position="186"/>
        <end position="193"/>
    </location>
</feature>
<feature type="repeat" description="CXXCXGXG motif">
    <location>
        <begin position="200"/>
        <end position="207"/>
    </location>
</feature>
<feature type="zinc finger region" description="CR-type" evidence="1">
    <location>
        <begin position="134"/>
        <end position="212"/>
    </location>
</feature>
<feature type="binding site" evidence="1">
    <location>
        <position position="147"/>
    </location>
    <ligand>
        <name>Zn(2+)</name>
        <dbReference type="ChEBI" id="CHEBI:29105"/>
        <label>1</label>
    </ligand>
</feature>
<feature type="binding site" evidence="1">
    <location>
        <position position="150"/>
    </location>
    <ligand>
        <name>Zn(2+)</name>
        <dbReference type="ChEBI" id="CHEBI:29105"/>
        <label>1</label>
    </ligand>
</feature>
<feature type="binding site" evidence="1">
    <location>
        <position position="164"/>
    </location>
    <ligand>
        <name>Zn(2+)</name>
        <dbReference type="ChEBI" id="CHEBI:29105"/>
        <label>2</label>
    </ligand>
</feature>
<feature type="binding site" evidence="1">
    <location>
        <position position="167"/>
    </location>
    <ligand>
        <name>Zn(2+)</name>
        <dbReference type="ChEBI" id="CHEBI:29105"/>
        <label>2</label>
    </ligand>
</feature>
<feature type="binding site" evidence="1">
    <location>
        <position position="186"/>
    </location>
    <ligand>
        <name>Zn(2+)</name>
        <dbReference type="ChEBI" id="CHEBI:29105"/>
        <label>2</label>
    </ligand>
</feature>
<feature type="binding site" evidence="1">
    <location>
        <position position="189"/>
    </location>
    <ligand>
        <name>Zn(2+)</name>
        <dbReference type="ChEBI" id="CHEBI:29105"/>
        <label>2</label>
    </ligand>
</feature>
<feature type="binding site" evidence="1">
    <location>
        <position position="200"/>
    </location>
    <ligand>
        <name>Zn(2+)</name>
        <dbReference type="ChEBI" id="CHEBI:29105"/>
        <label>1</label>
    </ligand>
</feature>
<feature type="binding site" evidence="1">
    <location>
        <position position="203"/>
    </location>
    <ligand>
        <name>Zn(2+)</name>
        <dbReference type="ChEBI" id="CHEBI:29105"/>
        <label>1</label>
    </ligand>
</feature>
<accession>Q47XI7</accession>
<keyword id="KW-0143">Chaperone</keyword>
<keyword id="KW-0963">Cytoplasm</keyword>
<keyword id="KW-0235">DNA replication</keyword>
<keyword id="KW-0479">Metal-binding</keyword>
<keyword id="KW-0677">Repeat</keyword>
<keyword id="KW-0346">Stress response</keyword>
<keyword id="KW-0862">Zinc</keyword>
<keyword id="KW-0863">Zinc-finger</keyword>